<accession>C3MW31</accession>
<organism>
    <name type="scientific">Saccharolobus islandicus (strain M.14.25 / Kamchatka #1)</name>
    <name type="common">Sulfolobus islandicus</name>
    <dbReference type="NCBI Taxonomy" id="427317"/>
    <lineage>
        <taxon>Archaea</taxon>
        <taxon>Thermoproteota</taxon>
        <taxon>Thermoprotei</taxon>
        <taxon>Sulfolobales</taxon>
        <taxon>Sulfolobaceae</taxon>
        <taxon>Saccharolobus</taxon>
    </lineage>
</organism>
<protein>
    <recommendedName>
        <fullName evidence="1">Phosphoribosylformylglycinamidine synthase subunit PurL</fullName>
        <shortName evidence="1">FGAM synthase</shortName>
        <ecNumber evidence="1">6.3.5.3</ecNumber>
    </recommendedName>
    <alternativeName>
        <fullName evidence="1">Formylglycinamide ribonucleotide amidotransferase subunit II</fullName>
        <shortName evidence="1">FGAR amidotransferase II</shortName>
        <shortName evidence="1">FGAR-AT II</shortName>
    </alternativeName>
    <alternativeName>
        <fullName evidence="1">Glutamine amidotransferase PurL</fullName>
    </alternativeName>
    <alternativeName>
        <fullName evidence="1">Phosphoribosylformylglycinamidine synthase subunit II</fullName>
    </alternativeName>
</protein>
<proteinExistence type="inferred from homology"/>
<gene>
    <name evidence="1" type="primary">purL</name>
    <name type="ordered locus">M1425_1503</name>
</gene>
<sequence length="709" mass="77174">MGLNLLPIEMDDIRKRLDREPNEIEWRVIDAVWSEHCSYKSSKIFLKSFSIDSPNVIMGIKDWQDAGAVDIGDGWAIVIKVESHNHPSAIDPFNGAATGVGGIIRDIISKGAKPIALMDMIRVGNLKIRKNVWLLKNIIAGIAAYGNSIGVPVVGGELSFDDTYNDNPLVDVAAIGIVRKDKIKPSIVDKAGLKLVLAGLTGIDGLGGASFASRKLSGEDEIGAVQIADPFAGKIILDVTLEIADKVEAIKDLGGGGLAVAVTEMANGLGAIVDIEKIPLRVKNMNPADVIISETQERMLYAVEEKNVEEVCKAFEEYEYPCSVIGEITSEPIIKFRYFGKDLVSLPTNALLEPPKFLWPIKNVRKNVEEKNVDLPLESTIYTVLSHPDLVSKEWVYSQFDYEVNTSTVVKPGDANGAVVSLPNGKLLAIKADGNPDLCSEDAYECGKGIVAEAYRNLATVGARGMVAVDHLQFGDPKKPEVYYTFVEAIRGIGEATRFFNIPIVGGKVSFYNENSQGKPIKPTPLIVMAGLVQGKLLKNRVEDSSYVVLLGYTRKELGGSLLSKIFKVPSQAPKVRLQEDLLSSEVVIDAINEEKITFAKDISRGGLAASLFNIIVHGYGVEISTKSILSDTDNVVENLFSESSGRFVILTNEPEWIVEKSRSKGIVASIIGKVNKKTSILTIDNTDYDLKTIVNNYFNFLEEVIGNG</sequence>
<reference key="1">
    <citation type="journal article" date="2009" name="Proc. Natl. Acad. Sci. U.S.A.">
        <title>Biogeography of the Sulfolobus islandicus pan-genome.</title>
        <authorList>
            <person name="Reno M.L."/>
            <person name="Held N.L."/>
            <person name="Fields C.J."/>
            <person name="Burke P.V."/>
            <person name="Whitaker R.J."/>
        </authorList>
    </citation>
    <scope>NUCLEOTIDE SEQUENCE [LARGE SCALE GENOMIC DNA]</scope>
    <source>
        <strain>M.14.25 / Kamchatka #1</strain>
    </source>
</reference>
<feature type="chain" id="PRO_1000206047" description="Phosphoribosylformylglycinamidine synthase subunit PurL">
    <location>
        <begin position="1"/>
        <end position="709"/>
    </location>
</feature>
<feature type="active site" evidence="1">
    <location>
        <position position="36"/>
    </location>
</feature>
<feature type="active site" description="Proton acceptor" evidence="1">
    <location>
        <position position="84"/>
    </location>
</feature>
<feature type="binding site" evidence="1">
    <location>
        <position position="39"/>
    </location>
    <ligand>
        <name>ATP</name>
        <dbReference type="ChEBI" id="CHEBI:30616"/>
    </ligand>
</feature>
<feature type="binding site" evidence="1">
    <location>
        <position position="80"/>
    </location>
    <ligand>
        <name>ATP</name>
        <dbReference type="ChEBI" id="CHEBI:30616"/>
    </ligand>
</feature>
<feature type="binding site" evidence="1">
    <location>
        <position position="82"/>
    </location>
    <ligand>
        <name>Mg(2+)</name>
        <dbReference type="ChEBI" id="CHEBI:18420"/>
        <label>1</label>
    </ligand>
</feature>
<feature type="binding site" evidence="1">
    <location>
        <begin position="83"/>
        <end position="86"/>
    </location>
    <ligand>
        <name>substrate</name>
    </ligand>
</feature>
<feature type="binding site" evidence="1">
    <location>
        <position position="105"/>
    </location>
    <ligand>
        <name>substrate</name>
    </ligand>
</feature>
<feature type="binding site" evidence="1">
    <location>
        <position position="106"/>
    </location>
    <ligand>
        <name>Mg(2+)</name>
        <dbReference type="ChEBI" id="CHEBI:18420"/>
        <label>2</label>
    </ligand>
</feature>
<feature type="binding site" evidence="1">
    <location>
        <position position="226"/>
    </location>
    <ligand>
        <name>substrate</name>
    </ligand>
</feature>
<feature type="binding site" evidence="1">
    <location>
        <position position="252"/>
    </location>
    <ligand>
        <name>Mg(2+)</name>
        <dbReference type="ChEBI" id="CHEBI:18420"/>
        <label>2</label>
    </ligand>
</feature>
<feature type="binding site" evidence="1">
    <location>
        <begin position="294"/>
        <end position="296"/>
    </location>
    <ligand>
        <name>substrate</name>
    </ligand>
</feature>
<feature type="binding site" evidence="1">
    <location>
        <position position="470"/>
    </location>
    <ligand>
        <name>ATP</name>
        <dbReference type="ChEBI" id="CHEBI:30616"/>
    </ligand>
</feature>
<feature type="binding site" evidence="1">
    <location>
        <position position="507"/>
    </location>
    <ligand>
        <name>ATP</name>
        <dbReference type="ChEBI" id="CHEBI:30616"/>
    </ligand>
</feature>
<feature type="binding site" evidence="1">
    <location>
        <position position="510"/>
    </location>
    <ligand>
        <name>substrate</name>
    </ligand>
</feature>
<evidence type="ECO:0000255" key="1">
    <source>
        <dbReference type="HAMAP-Rule" id="MF_00420"/>
    </source>
</evidence>
<comment type="function">
    <text evidence="1">Part of the phosphoribosylformylglycinamidine synthase complex involved in the purines biosynthetic pathway. Catalyzes the ATP-dependent conversion of formylglycinamide ribonucleotide (FGAR) and glutamine to yield formylglycinamidine ribonucleotide (FGAM) and glutamate. The FGAM synthase complex is composed of three subunits. PurQ produces an ammonia molecule by converting glutamine to glutamate. PurL transfers the ammonia molecule to FGAR to form FGAM in an ATP-dependent manner. PurS interacts with PurQ and PurL and is thought to assist in the transfer of the ammonia molecule from PurQ to PurL.</text>
</comment>
<comment type="catalytic activity">
    <reaction evidence="1">
        <text>N(2)-formyl-N(1)-(5-phospho-beta-D-ribosyl)glycinamide + L-glutamine + ATP + H2O = 2-formamido-N(1)-(5-O-phospho-beta-D-ribosyl)acetamidine + L-glutamate + ADP + phosphate + H(+)</text>
        <dbReference type="Rhea" id="RHEA:17129"/>
        <dbReference type="ChEBI" id="CHEBI:15377"/>
        <dbReference type="ChEBI" id="CHEBI:15378"/>
        <dbReference type="ChEBI" id="CHEBI:29985"/>
        <dbReference type="ChEBI" id="CHEBI:30616"/>
        <dbReference type="ChEBI" id="CHEBI:43474"/>
        <dbReference type="ChEBI" id="CHEBI:58359"/>
        <dbReference type="ChEBI" id="CHEBI:147286"/>
        <dbReference type="ChEBI" id="CHEBI:147287"/>
        <dbReference type="ChEBI" id="CHEBI:456216"/>
        <dbReference type="EC" id="6.3.5.3"/>
    </reaction>
</comment>
<comment type="pathway">
    <text evidence="1">Purine metabolism; IMP biosynthesis via de novo pathway; 5-amino-1-(5-phospho-D-ribosyl)imidazole from N(2)-formyl-N(1)-(5-phospho-D-ribosyl)glycinamide: step 1/2.</text>
</comment>
<comment type="subunit">
    <text evidence="1">Monomer. Part of the FGAM synthase complex composed of 1 PurL, 1 PurQ and 2 PurS subunits.</text>
</comment>
<comment type="subcellular location">
    <subcellularLocation>
        <location evidence="1">Cytoplasm</location>
    </subcellularLocation>
</comment>
<comment type="similarity">
    <text evidence="1">Belongs to the FGAMS family.</text>
</comment>
<keyword id="KW-0067">ATP-binding</keyword>
<keyword id="KW-0963">Cytoplasm</keyword>
<keyword id="KW-0436">Ligase</keyword>
<keyword id="KW-0460">Magnesium</keyword>
<keyword id="KW-0479">Metal-binding</keyword>
<keyword id="KW-0547">Nucleotide-binding</keyword>
<keyword id="KW-0658">Purine biosynthesis</keyword>
<name>PURL_SACI4</name>
<dbReference type="EC" id="6.3.5.3" evidence="1"/>
<dbReference type="EMBL" id="CP001400">
    <property type="protein sequence ID" value="ACP38253.1"/>
    <property type="molecule type" value="Genomic_DNA"/>
</dbReference>
<dbReference type="RefSeq" id="WP_012711498.1">
    <property type="nucleotide sequence ID" value="NC_012588.1"/>
</dbReference>
<dbReference type="SMR" id="C3MW31"/>
<dbReference type="GeneID" id="7793953"/>
<dbReference type="KEGG" id="sia:M1425_1503"/>
<dbReference type="HOGENOM" id="CLU_003100_0_1_2"/>
<dbReference type="UniPathway" id="UPA00074">
    <property type="reaction ID" value="UER00128"/>
</dbReference>
<dbReference type="Proteomes" id="UP000001350">
    <property type="component" value="Chromosome"/>
</dbReference>
<dbReference type="GO" id="GO:0005737">
    <property type="term" value="C:cytoplasm"/>
    <property type="evidence" value="ECO:0007669"/>
    <property type="project" value="UniProtKB-SubCell"/>
</dbReference>
<dbReference type="GO" id="GO:0005524">
    <property type="term" value="F:ATP binding"/>
    <property type="evidence" value="ECO:0007669"/>
    <property type="project" value="UniProtKB-UniRule"/>
</dbReference>
<dbReference type="GO" id="GO:0000287">
    <property type="term" value="F:magnesium ion binding"/>
    <property type="evidence" value="ECO:0007669"/>
    <property type="project" value="UniProtKB-UniRule"/>
</dbReference>
<dbReference type="GO" id="GO:0004642">
    <property type="term" value="F:phosphoribosylformylglycinamidine synthase activity"/>
    <property type="evidence" value="ECO:0007669"/>
    <property type="project" value="UniProtKB-UniRule"/>
</dbReference>
<dbReference type="GO" id="GO:0006189">
    <property type="term" value="P:'de novo' IMP biosynthetic process"/>
    <property type="evidence" value="ECO:0007669"/>
    <property type="project" value="UniProtKB-UniRule"/>
</dbReference>
<dbReference type="CDD" id="cd02203">
    <property type="entry name" value="PurL_repeat1"/>
    <property type="match status" value="1"/>
</dbReference>
<dbReference type="CDD" id="cd02204">
    <property type="entry name" value="PurL_repeat2"/>
    <property type="match status" value="1"/>
</dbReference>
<dbReference type="Gene3D" id="3.90.650.10">
    <property type="entry name" value="PurM-like C-terminal domain"/>
    <property type="match status" value="2"/>
</dbReference>
<dbReference type="Gene3D" id="3.30.1330.10">
    <property type="entry name" value="PurM-like, N-terminal domain"/>
    <property type="match status" value="2"/>
</dbReference>
<dbReference type="HAMAP" id="MF_00420">
    <property type="entry name" value="PurL_2"/>
    <property type="match status" value="1"/>
</dbReference>
<dbReference type="InterPro" id="IPR010074">
    <property type="entry name" value="PRibForGlyAmidine_synth_PurL"/>
</dbReference>
<dbReference type="InterPro" id="IPR041609">
    <property type="entry name" value="PurL_linker"/>
</dbReference>
<dbReference type="InterPro" id="IPR010918">
    <property type="entry name" value="PurM-like_C_dom"/>
</dbReference>
<dbReference type="InterPro" id="IPR036676">
    <property type="entry name" value="PurM-like_C_sf"/>
</dbReference>
<dbReference type="InterPro" id="IPR016188">
    <property type="entry name" value="PurM-like_N"/>
</dbReference>
<dbReference type="InterPro" id="IPR036921">
    <property type="entry name" value="PurM-like_N_sf"/>
</dbReference>
<dbReference type="NCBIfam" id="TIGR01736">
    <property type="entry name" value="FGAM_synth_II"/>
    <property type="match status" value="1"/>
</dbReference>
<dbReference type="NCBIfam" id="NF002290">
    <property type="entry name" value="PRK01213.1"/>
    <property type="match status" value="1"/>
</dbReference>
<dbReference type="PANTHER" id="PTHR43555">
    <property type="entry name" value="PHOSPHORIBOSYLFORMYLGLYCINAMIDINE SYNTHASE SUBUNIT PURL"/>
    <property type="match status" value="1"/>
</dbReference>
<dbReference type="PANTHER" id="PTHR43555:SF1">
    <property type="entry name" value="PHOSPHORIBOSYLFORMYLGLYCINAMIDINE SYNTHASE SUBUNIT PURL"/>
    <property type="match status" value="1"/>
</dbReference>
<dbReference type="Pfam" id="PF00586">
    <property type="entry name" value="AIRS"/>
    <property type="match status" value="2"/>
</dbReference>
<dbReference type="Pfam" id="PF02769">
    <property type="entry name" value="AIRS_C"/>
    <property type="match status" value="2"/>
</dbReference>
<dbReference type="Pfam" id="PF18072">
    <property type="entry name" value="FGAR-AT_linker"/>
    <property type="match status" value="1"/>
</dbReference>
<dbReference type="PIRSF" id="PIRSF001587">
    <property type="entry name" value="FGAM_synthase_II"/>
    <property type="match status" value="1"/>
</dbReference>
<dbReference type="SUPFAM" id="SSF56042">
    <property type="entry name" value="PurM C-terminal domain-like"/>
    <property type="match status" value="2"/>
</dbReference>
<dbReference type="SUPFAM" id="SSF55326">
    <property type="entry name" value="PurM N-terminal domain-like"/>
    <property type="match status" value="2"/>
</dbReference>